<feature type="chain" id="PRO_0000348366" description="Glyoxylate/hydroxypyruvate reductase A">
    <location>
        <begin position="1"/>
        <end position="313"/>
    </location>
</feature>
<feature type="active site" evidence="1">
    <location>
        <position position="228"/>
    </location>
</feature>
<feature type="active site" description="Proton donor" evidence="1">
    <location>
        <position position="276"/>
    </location>
</feature>
<sequence length="313" mass="35508">MEIIFYHPFFDAAQWIQGMQQRLPNINIRQWKRGDNKHADYAMVWAPPYEMLANRSGLKGIFILGAGVEAILKQEQQKPGMLPAGVPLMRLEDAGMGLQMQEYAVAMVLHYLRRMDEYKLQQGQRRWKQLEPYDRKDFVVGVLGAGVLGRRVAQTLVEWGFIVRCWSRTPKQINNVVSFHGEDQLGDFLSGSKVLINLLPDTPKTRGILNLSLFSQLKPKSYLINIARGAHLVEHDLLVAIDKGYIVGASLDVFVEEPLPEMHPFWTHPRITVTPHVAAITIPDIAMDTISENIRRIEKGELSTGVVDIKLGY</sequence>
<dbReference type="EC" id="1.1.1.79" evidence="1"/>
<dbReference type="EC" id="1.1.1.81" evidence="1"/>
<dbReference type="EMBL" id="BX571866">
    <property type="protein sequence ID" value="CAE14379.1"/>
    <property type="molecule type" value="Genomic_DNA"/>
</dbReference>
<dbReference type="RefSeq" id="WP_011146341.1">
    <property type="nucleotide sequence ID" value="NC_005126.1"/>
</dbReference>
<dbReference type="SMR" id="Q7N571"/>
<dbReference type="STRING" id="243265.plu2086"/>
<dbReference type="GeneID" id="48848365"/>
<dbReference type="KEGG" id="plu:plu2086"/>
<dbReference type="eggNOG" id="COG0111">
    <property type="taxonomic scope" value="Bacteria"/>
</dbReference>
<dbReference type="HOGENOM" id="CLU_019796_1_0_6"/>
<dbReference type="OrthoDB" id="9787219at2"/>
<dbReference type="Proteomes" id="UP000002514">
    <property type="component" value="Chromosome"/>
</dbReference>
<dbReference type="GO" id="GO:0005737">
    <property type="term" value="C:cytoplasm"/>
    <property type="evidence" value="ECO:0007669"/>
    <property type="project" value="UniProtKB-SubCell"/>
</dbReference>
<dbReference type="GO" id="GO:0030267">
    <property type="term" value="F:glyoxylate reductase (NADPH) activity"/>
    <property type="evidence" value="ECO:0007669"/>
    <property type="project" value="UniProtKB-UniRule"/>
</dbReference>
<dbReference type="GO" id="GO:0008465">
    <property type="term" value="F:hydroxypyruvate reductase (NADH) activity"/>
    <property type="evidence" value="ECO:0007669"/>
    <property type="project" value="RHEA"/>
</dbReference>
<dbReference type="GO" id="GO:0120509">
    <property type="term" value="F:hydroxypyruvate reductase (NADPH) activity"/>
    <property type="evidence" value="ECO:0007669"/>
    <property type="project" value="RHEA"/>
</dbReference>
<dbReference type="GO" id="GO:0051287">
    <property type="term" value="F:NAD binding"/>
    <property type="evidence" value="ECO:0007669"/>
    <property type="project" value="InterPro"/>
</dbReference>
<dbReference type="CDD" id="cd12164">
    <property type="entry name" value="GDH_like_2"/>
    <property type="match status" value="1"/>
</dbReference>
<dbReference type="Gene3D" id="3.40.50.720">
    <property type="entry name" value="NAD(P)-binding Rossmann-like Domain"/>
    <property type="match status" value="2"/>
</dbReference>
<dbReference type="HAMAP" id="MF_01666">
    <property type="entry name" value="2_Hacid_dh_C_GhrA"/>
    <property type="match status" value="1"/>
</dbReference>
<dbReference type="InterPro" id="IPR029753">
    <property type="entry name" value="D-isomer_DH_CS"/>
</dbReference>
<dbReference type="InterPro" id="IPR006140">
    <property type="entry name" value="D-isomer_DH_NAD-bd"/>
</dbReference>
<dbReference type="InterPro" id="IPR023514">
    <property type="entry name" value="GhrA_Enterobacterales"/>
</dbReference>
<dbReference type="InterPro" id="IPR036291">
    <property type="entry name" value="NAD(P)-bd_dom_sf"/>
</dbReference>
<dbReference type="NCBIfam" id="NF012013">
    <property type="entry name" value="PRK15469.1"/>
    <property type="match status" value="1"/>
</dbReference>
<dbReference type="PANTHER" id="PTHR43333">
    <property type="entry name" value="2-HACID_DH_C DOMAIN-CONTAINING PROTEIN"/>
    <property type="match status" value="1"/>
</dbReference>
<dbReference type="PANTHER" id="PTHR43333:SF1">
    <property type="entry name" value="D-ISOMER SPECIFIC 2-HYDROXYACID DEHYDROGENASE NAD-BINDING DOMAIN-CONTAINING PROTEIN"/>
    <property type="match status" value="1"/>
</dbReference>
<dbReference type="Pfam" id="PF02826">
    <property type="entry name" value="2-Hacid_dh_C"/>
    <property type="match status" value="1"/>
</dbReference>
<dbReference type="SUPFAM" id="SSF51735">
    <property type="entry name" value="NAD(P)-binding Rossmann-fold domains"/>
    <property type="match status" value="1"/>
</dbReference>
<dbReference type="PROSITE" id="PS00671">
    <property type="entry name" value="D_2_HYDROXYACID_DH_3"/>
    <property type="match status" value="1"/>
</dbReference>
<protein>
    <recommendedName>
        <fullName evidence="1">Glyoxylate/hydroxypyruvate reductase A</fullName>
        <ecNumber evidence="1">1.1.1.79</ecNumber>
        <ecNumber evidence="1">1.1.1.81</ecNumber>
    </recommendedName>
    <alternativeName>
        <fullName evidence="1">2-ketoacid reductase</fullName>
    </alternativeName>
</protein>
<reference key="1">
    <citation type="journal article" date="2003" name="Nat. Biotechnol.">
        <title>The genome sequence of the entomopathogenic bacterium Photorhabdus luminescens.</title>
        <authorList>
            <person name="Duchaud E."/>
            <person name="Rusniok C."/>
            <person name="Frangeul L."/>
            <person name="Buchrieser C."/>
            <person name="Givaudan A."/>
            <person name="Taourit S."/>
            <person name="Bocs S."/>
            <person name="Boursaux-Eude C."/>
            <person name="Chandler M."/>
            <person name="Charles J.-F."/>
            <person name="Dassa E."/>
            <person name="Derose R."/>
            <person name="Derzelle S."/>
            <person name="Freyssinet G."/>
            <person name="Gaudriault S."/>
            <person name="Medigue C."/>
            <person name="Lanois A."/>
            <person name="Powell K."/>
            <person name="Siguier P."/>
            <person name="Vincent R."/>
            <person name="Wingate V."/>
            <person name="Zouine M."/>
            <person name="Glaser P."/>
            <person name="Boemare N."/>
            <person name="Danchin A."/>
            <person name="Kunst F."/>
        </authorList>
    </citation>
    <scope>NUCLEOTIDE SEQUENCE [LARGE SCALE GENOMIC DNA]</scope>
    <source>
        <strain>DSM 15139 / CIP 105565 / TT01</strain>
    </source>
</reference>
<comment type="function">
    <text evidence="1">Catalyzes the NADPH-dependent reduction of glyoxylate and hydroxypyruvate into glycolate and glycerate, respectively.</text>
</comment>
<comment type="catalytic activity">
    <reaction evidence="1">
        <text>glycolate + NADP(+) = glyoxylate + NADPH + H(+)</text>
        <dbReference type="Rhea" id="RHEA:10992"/>
        <dbReference type="ChEBI" id="CHEBI:15378"/>
        <dbReference type="ChEBI" id="CHEBI:29805"/>
        <dbReference type="ChEBI" id="CHEBI:36655"/>
        <dbReference type="ChEBI" id="CHEBI:57783"/>
        <dbReference type="ChEBI" id="CHEBI:58349"/>
        <dbReference type="EC" id="1.1.1.79"/>
    </reaction>
</comment>
<comment type="catalytic activity">
    <reaction evidence="1">
        <text>(R)-glycerate + NAD(+) = 3-hydroxypyruvate + NADH + H(+)</text>
        <dbReference type="Rhea" id="RHEA:17905"/>
        <dbReference type="ChEBI" id="CHEBI:15378"/>
        <dbReference type="ChEBI" id="CHEBI:16659"/>
        <dbReference type="ChEBI" id="CHEBI:17180"/>
        <dbReference type="ChEBI" id="CHEBI:57540"/>
        <dbReference type="ChEBI" id="CHEBI:57945"/>
        <dbReference type="EC" id="1.1.1.81"/>
    </reaction>
</comment>
<comment type="catalytic activity">
    <reaction evidence="1">
        <text>(R)-glycerate + NADP(+) = 3-hydroxypyruvate + NADPH + H(+)</text>
        <dbReference type="Rhea" id="RHEA:18657"/>
        <dbReference type="ChEBI" id="CHEBI:15378"/>
        <dbReference type="ChEBI" id="CHEBI:16659"/>
        <dbReference type="ChEBI" id="CHEBI:17180"/>
        <dbReference type="ChEBI" id="CHEBI:57783"/>
        <dbReference type="ChEBI" id="CHEBI:58349"/>
        <dbReference type="EC" id="1.1.1.81"/>
    </reaction>
</comment>
<comment type="subcellular location">
    <subcellularLocation>
        <location evidence="1">Cytoplasm</location>
    </subcellularLocation>
</comment>
<comment type="similarity">
    <text evidence="1">Belongs to the D-isomer specific 2-hydroxyacid dehydrogenase family. GhrA subfamily.</text>
</comment>
<gene>
    <name evidence="1" type="primary">ghrA</name>
    <name type="ordered locus">plu2086</name>
</gene>
<proteinExistence type="inferred from homology"/>
<accession>Q7N571</accession>
<organism>
    <name type="scientific">Photorhabdus laumondii subsp. laumondii (strain DSM 15139 / CIP 105565 / TT01)</name>
    <name type="common">Photorhabdus luminescens subsp. laumondii</name>
    <dbReference type="NCBI Taxonomy" id="243265"/>
    <lineage>
        <taxon>Bacteria</taxon>
        <taxon>Pseudomonadati</taxon>
        <taxon>Pseudomonadota</taxon>
        <taxon>Gammaproteobacteria</taxon>
        <taxon>Enterobacterales</taxon>
        <taxon>Morganellaceae</taxon>
        <taxon>Photorhabdus</taxon>
    </lineage>
</organism>
<name>GHRA_PHOLL</name>
<keyword id="KW-0963">Cytoplasm</keyword>
<keyword id="KW-0520">NAD</keyword>
<keyword id="KW-0521">NADP</keyword>
<keyword id="KW-0560">Oxidoreductase</keyword>
<keyword id="KW-1185">Reference proteome</keyword>
<evidence type="ECO:0000255" key="1">
    <source>
        <dbReference type="HAMAP-Rule" id="MF_01666"/>
    </source>
</evidence>